<evidence type="ECO:0000255" key="1">
    <source>
        <dbReference type="HAMAP-Rule" id="MF_00671"/>
    </source>
</evidence>
<accession>Q8P6F2</accession>
<proteinExistence type="inferred from homology"/>
<gene>
    <name evidence="1" type="primary">tolB</name>
    <name type="ordered locus">XCC3018</name>
</gene>
<protein>
    <recommendedName>
        <fullName evidence="1">Tol-Pal system protein TolB</fullName>
    </recommendedName>
</protein>
<name>TOLB_XANCP</name>
<dbReference type="EMBL" id="AE008922">
    <property type="protein sequence ID" value="AAM42289.1"/>
    <property type="molecule type" value="Genomic_DNA"/>
</dbReference>
<dbReference type="RefSeq" id="NP_638365.1">
    <property type="nucleotide sequence ID" value="NC_003902.1"/>
</dbReference>
<dbReference type="RefSeq" id="WP_011038134.1">
    <property type="nucleotide sequence ID" value="NC_003902.1"/>
</dbReference>
<dbReference type="SMR" id="Q8P6F2"/>
<dbReference type="STRING" id="190485.XCC3018"/>
<dbReference type="EnsemblBacteria" id="AAM42289">
    <property type="protein sequence ID" value="AAM42289"/>
    <property type="gene ID" value="XCC3018"/>
</dbReference>
<dbReference type="KEGG" id="xcc:XCC3018"/>
<dbReference type="PATRIC" id="fig|190485.4.peg.3219"/>
<dbReference type="eggNOG" id="COG0823">
    <property type="taxonomic scope" value="Bacteria"/>
</dbReference>
<dbReference type="HOGENOM" id="CLU_047123_0_0_6"/>
<dbReference type="OrthoDB" id="9802240at2"/>
<dbReference type="Proteomes" id="UP000001010">
    <property type="component" value="Chromosome"/>
</dbReference>
<dbReference type="GO" id="GO:0042597">
    <property type="term" value="C:periplasmic space"/>
    <property type="evidence" value="ECO:0007669"/>
    <property type="project" value="UniProtKB-SubCell"/>
</dbReference>
<dbReference type="GO" id="GO:0051301">
    <property type="term" value="P:cell division"/>
    <property type="evidence" value="ECO:0007669"/>
    <property type="project" value="UniProtKB-UniRule"/>
</dbReference>
<dbReference type="GO" id="GO:0017038">
    <property type="term" value="P:protein import"/>
    <property type="evidence" value="ECO:0007669"/>
    <property type="project" value="InterPro"/>
</dbReference>
<dbReference type="Gene3D" id="2.120.10.30">
    <property type="entry name" value="TolB, C-terminal domain"/>
    <property type="match status" value="1"/>
</dbReference>
<dbReference type="Gene3D" id="3.40.50.10070">
    <property type="entry name" value="TolB, N-terminal domain"/>
    <property type="match status" value="1"/>
</dbReference>
<dbReference type="HAMAP" id="MF_00671">
    <property type="entry name" value="TolB"/>
    <property type="match status" value="1"/>
</dbReference>
<dbReference type="InterPro" id="IPR011042">
    <property type="entry name" value="6-blade_b-propeller_TolB-like"/>
</dbReference>
<dbReference type="InterPro" id="IPR011659">
    <property type="entry name" value="PD40"/>
</dbReference>
<dbReference type="InterPro" id="IPR014167">
    <property type="entry name" value="Tol-Pal_TolB"/>
</dbReference>
<dbReference type="InterPro" id="IPR007195">
    <property type="entry name" value="TolB_N"/>
</dbReference>
<dbReference type="NCBIfam" id="TIGR02800">
    <property type="entry name" value="propeller_TolB"/>
    <property type="match status" value="1"/>
</dbReference>
<dbReference type="PANTHER" id="PTHR36842:SF1">
    <property type="entry name" value="PROTEIN TOLB"/>
    <property type="match status" value="1"/>
</dbReference>
<dbReference type="PANTHER" id="PTHR36842">
    <property type="entry name" value="PROTEIN TOLB HOMOLOG"/>
    <property type="match status" value="1"/>
</dbReference>
<dbReference type="Pfam" id="PF07676">
    <property type="entry name" value="PD40"/>
    <property type="match status" value="3"/>
</dbReference>
<dbReference type="Pfam" id="PF04052">
    <property type="entry name" value="TolB_N"/>
    <property type="match status" value="1"/>
</dbReference>
<dbReference type="SUPFAM" id="SSF52964">
    <property type="entry name" value="TolB, N-terminal domain"/>
    <property type="match status" value="1"/>
</dbReference>
<dbReference type="SUPFAM" id="SSF69304">
    <property type="entry name" value="Tricorn protease N-terminal domain"/>
    <property type="match status" value="1"/>
</dbReference>
<feature type="signal peptide" evidence="1">
    <location>
        <begin position="1"/>
        <end position="22"/>
    </location>
</feature>
<feature type="chain" id="PRO_0000034698" description="Tol-Pal system protein TolB" evidence="1">
    <location>
        <begin position="23"/>
        <end position="439"/>
    </location>
</feature>
<organism>
    <name type="scientific">Xanthomonas campestris pv. campestris (strain ATCC 33913 / DSM 3586 / NCPPB 528 / LMG 568 / P 25)</name>
    <dbReference type="NCBI Taxonomy" id="190485"/>
    <lineage>
        <taxon>Bacteria</taxon>
        <taxon>Pseudomonadati</taxon>
        <taxon>Pseudomonadota</taxon>
        <taxon>Gammaproteobacteria</taxon>
        <taxon>Lysobacterales</taxon>
        <taxon>Lysobacteraceae</taxon>
        <taxon>Xanthomonas</taxon>
    </lineage>
</organism>
<reference key="1">
    <citation type="journal article" date="2002" name="Nature">
        <title>Comparison of the genomes of two Xanthomonas pathogens with differing host specificities.</title>
        <authorList>
            <person name="da Silva A.C.R."/>
            <person name="Ferro J.A."/>
            <person name="Reinach F.C."/>
            <person name="Farah C.S."/>
            <person name="Furlan L.R."/>
            <person name="Quaggio R.B."/>
            <person name="Monteiro-Vitorello C.B."/>
            <person name="Van Sluys M.A."/>
            <person name="Almeida N.F. Jr."/>
            <person name="Alves L.M.C."/>
            <person name="do Amaral A.M."/>
            <person name="Bertolini M.C."/>
            <person name="Camargo L.E.A."/>
            <person name="Camarotte G."/>
            <person name="Cannavan F."/>
            <person name="Cardozo J."/>
            <person name="Chambergo F."/>
            <person name="Ciapina L.P."/>
            <person name="Cicarelli R.M.B."/>
            <person name="Coutinho L.L."/>
            <person name="Cursino-Santos J.R."/>
            <person name="El-Dorry H."/>
            <person name="Faria J.B."/>
            <person name="Ferreira A.J.S."/>
            <person name="Ferreira R.C.C."/>
            <person name="Ferro M.I.T."/>
            <person name="Formighieri E.F."/>
            <person name="Franco M.C."/>
            <person name="Greggio C.C."/>
            <person name="Gruber A."/>
            <person name="Katsuyama A.M."/>
            <person name="Kishi L.T."/>
            <person name="Leite R.P."/>
            <person name="Lemos E.G.M."/>
            <person name="Lemos M.V.F."/>
            <person name="Locali E.C."/>
            <person name="Machado M.A."/>
            <person name="Madeira A.M.B.N."/>
            <person name="Martinez-Rossi N.M."/>
            <person name="Martins E.C."/>
            <person name="Meidanis J."/>
            <person name="Menck C.F.M."/>
            <person name="Miyaki C.Y."/>
            <person name="Moon D.H."/>
            <person name="Moreira L.M."/>
            <person name="Novo M.T.M."/>
            <person name="Okura V.K."/>
            <person name="Oliveira M.C."/>
            <person name="Oliveira V.R."/>
            <person name="Pereira H.A."/>
            <person name="Rossi A."/>
            <person name="Sena J.A.D."/>
            <person name="Silva C."/>
            <person name="de Souza R.F."/>
            <person name="Spinola L.A.F."/>
            <person name="Takita M.A."/>
            <person name="Tamura R.E."/>
            <person name="Teixeira E.C."/>
            <person name="Tezza R.I.D."/>
            <person name="Trindade dos Santos M."/>
            <person name="Truffi D."/>
            <person name="Tsai S.M."/>
            <person name="White F.F."/>
            <person name="Setubal J.C."/>
            <person name="Kitajima J.P."/>
        </authorList>
    </citation>
    <scope>NUCLEOTIDE SEQUENCE [LARGE SCALE GENOMIC DNA]</scope>
    <source>
        <strain>ATCC 33913 / DSM 3586 / NCPPB 528 / LMG 568 / P 25</strain>
    </source>
</reference>
<keyword id="KW-0131">Cell cycle</keyword>
<keyword id="KW-0132">Cell division</keyword>
<keyword id="KW-0574">Periplasm</keyword>
<keyword id="KW-1185">Reference proteome</keyword>
<keyword id="KW-0732">Signal</keyword>
<sequence length="439" mass="47035">MKKPLRWLAALTALLLPLSAFAQQQGLTIDIVGGSASATPITVVPMPYQGSGTAPQTDVSAVVSADLDRSGQFRTLPAAQIVEKPTRGTEVQFQTWRTLKQNYIVVGRVMDAGEGAYRVEYELFDVAKGERLLGLAMTARANAMRDVSHQMADAIYEKVTGVRGAFWTRIAYVTASGSGGSMRYALMVADSDGYNPQTIVRSAEPLLSPNWSPDGKKLAYVSFERGNSSIYLQDIASGARELVSSFRGINGAPSFSPDGRRLALALSRSGNPEIYVMDLGSKQLTQLTNHFGIDTEPTWAPDGGSIYFTSDRGGRPQIYQVAASGGSANRVTFQGNYNATASVSFDGKKVAVAQGSGNTYRIAMMDRSLGSPSWSTLSPGSLDESPSFAPNASMVLYAAREGGRGVLYAVSADARVRQRLVLADGDVREPAWGPYRTAH</sequence>
<comment type="function">
    <text evidence="1">Part of the Tol-Pal system, which plays a role in outer membrane invagination during cell division and is important for maintaining outer membrane integrity.</text>
</comment>
<comment type="subunit">
    <text evidence="1">The Tol-Pal system is composed of five core proteins: the inner membrane proteins TolA, TolQ and TolR, the periplasmic protein TolB and the outer membrane protein Pal. They form a network linking the inner and outer membranes and the peptidoglycan layer.</text>
</comment>
<comment type="subcellular location">
    <subcellularLocation>
        <location evidence="1">Periplasm</location>
    </subcellularLocation>
</comment>
<comment type="similarity">
    <text evidence="1">Belongs to the TolB family.</text>
</comment>